<reference key="1">
    <citation type="journal article" date="2005" name="Science">
        <title>The transcriptional landscape of the mammalian genome.</title>
        <authorList>
            <person name="Carninci P."/>
            <person name="Kasukawa T."/>
            <person name="Katayama S."/>
            <person name="Gough J."/>
            <person name="Frith M.C."/>
            <person name="Maeda N."/>
            <person name="Oyama R."/>
            <person name="Ravasi T."/>
            <person name="Lenhard B."/>
            <person name="Wells C."/>
            <person name="Kodzius R."/>
            <person name="Shimokawa K."/>
            <person name="Bajic V.B."/>
            <person name="Brenner S.E."/>
            <person name="Batalov S."/>
            <person name="Forrest A.R."/>
            <person name="Zavolan M."/>
            <person name="Davis M.J."/>
            <person name="Wilming L.G."/>
            <person name="Aidinis V."/>
            <person name="Allen J.E."/>
            <person name="Ambesi-Impiombato A."/>
            <person name="Apweiler R."/>
            <person name="Aturaliya R.N."/>
            <person name="Bailey T.L."/>
            <person name="Bansal M."/>
            <person name="Baxter L."/>
            <person name="Beisel K.W."/>
            <person name="Bersano T."/>
            <person name="Bono H."/>
            <person name="Chalk A.M."/>
            <person name="Chiu K.P."/>
            <person name="Choudhary V."/>
            <person name="Christoffels A."/>
            <person name="Clutterbuck D.R."/>
            <person name="Crowe M.L."/>
            <person name="Dalla E."/>
            <person name="Dalrymple B.P."/>
            <person name="de Bono B."/>
            <person name="Della Gatta G."/>
            <person name="di Bernardo D."/>
            <person name="Down T."/>
            <person name="Engstrom P."/>
            <person name="Fagiolini M."/>
            <person name="Faulkner G."/>
            <person name="Fletcher C.F."/>
            <person name="Fukushima T."/>
            <person name="Furuno M."/>
            <person name="Futaki S."/>
            <person name="Gariboldi M."/>
            <person name="Georgii-Hemming P."/>
            <person name="Gingeras T.R."/>
            <person name="Gojobori T."/>
            <person name="Green R.E."/>
            <person name="Gustincich S."/>
            <person name="Harbers M."/>
            <person name="Hayashi Y."/>
            <person name="Hensch T.K."/>
            <person name="Hirokawa N."/>
            <person name="Hill D."/>
            <person name="Huminiecki L."/>
            <person name="Iacono M."/>
            <person name="Ikeo K."/>
            <person name="Iwama A."/>
            <person name="Ishikawa T."/>
            <person name="Jakt M."/>
            <person name="Kanapin A."/>
            <person name="Katoh M."/>
            <person name="Kawasawa Y."/>
            <person name="Kelso J."/>
            <person name="Kitamura H."/>
            <person name="Kitano H."/>
            <person name="Kollias G."/>
            <person name="Krishnan S.P."/>
            <person name="Kruger A."/>
            <person name="Kummerfeld S.K."/>
            <person name="Kurochkin I.V."/>
            <person name="Lareau L.F."/>
            <person name="Lazarevic D."/>
            <person name="Lipovich L."/>
            <person name="Liu J."/>
            <person name="Liuni S."/>
            <person name="McWilliam S."/>
            <person name="Madan Babu M."/>
            <person name="Madera M."/>
            <person name="Marchionni L."/>
            <person name="Matsuda H."/>
            <person name="Matsuzawa S."/>
            <person name="Miki H."/>
            <person name="Mignone F."/>
            <person name="Miyake S."/>
            <person name="Morris K."/>
            <person name="Mottagui-Tabar S."/>
            <person name="Mulder N."/>
            <person name="Nakano N."/>
            <person name="Nakauchi H."/>
            <person name="Ng P."/>
            <person name="Nilsson R."/>
            <person name="Nishiguchi S."/>
            <person name="Nishikawa S."/>
            <person name="Nori F."/>
            <person name="Ohara O."/>
            <person name="Okazaki Y."/>
            <person name="Orlando V."/>
            <person name="Pang K.C."/>
            <person name="Pavan W.J."/>
            <person name="Pavesi G."/>
            <person name="Pesole G."/>
            <person name="Petrovsky N."/>
            <person name="Piazza S."/>
            <person name="Reed J."/>
            <person name="Reid J.F."/>
            <person name="Ring B.Z."/>
            <person name="Ringwald M."/>
            <person name="Rost B."/>
            <person name="Ruan Y."/>
            <person name="Salzberg S.L."/>
            <person name="Sandelin A."/>
            <person name="Schneider C."/>
            <person name="Schoenbach C."/>
            <person name="Sekiguchi K."/>
            <person name="Semple C.A."/>
            <person name="Seno S."/>
            <person name="Sessa L."/>
            <person name="Sheng Y."/>
            <person name="Shibata Y."/>
            <person name="Shimada H."/>
            <person name="Shimada K."/>
            <person name="Silva D."/>
            <person name="Sinclair B."/>
            <person name="Sperling S."/>
            <person name="Stupka E."/>
            <person name="Sugiura K."/>
            <person name="Sultana R."/>
            <person name="Takenaka Y."/>
            <person name="Taki K."/>
            <person name="Tammoja K."/>
            <person name="Tan S.L."/>
            <person name="Tang S."/>
            <person name="Taylor M.S."/>
            <person name="Tegner J."/>
            <person name="Teichmann S.A."/>
            <person name="Ueda H.R."/>
            <person name="van Nimwegen E."/>
            <person name="Verardo R."/>
            <person name="Wei C.L."/>
            <person name="Yagi K."/>
            <person name="Yamanishi H."/>
            <person name="Zabarovsky E."/>
            <person name="Zhu S."/>
            <person name="Zimmer A."/>
            <person name="Hide W."/>
            <person name="Bult C."/>
            <person name="Grimmond S.M."/>
            <person name="Teasdale R.D."/>
            <person name="Liu E.T."/>
            <person name="Brusic V."/>
            <person name="Quackenbush J."/>
            <person name="Wahlestedt C."/>
            <person name="Mattick J.S."/>
            <person name="Hume D.A."/>
            <person name="Kai C."/>
            <person name="Sasaki D."/>
            <person name="Tomaru Y."/>
            <person name="Fukuda S."/>
            <person name="Kanamori-Katayama M."/>
            <person name="Suzuki M."/>
            <person name="Aoki J."/>
            <person name="Arakawa T."/>
            <person name="Iida J."/>
            <person name="Imamura K."/>
            <person name="Itoh M."/>
            <person name="Kato T."/>
            <person name="Kawaji H."/>
            <person name="Kawagashira N."/>
            <person name="Kawashima T."/>
            <person name="Kojima M."/>
            <person name="Kondo S."/>
            <person name="Konno H."/>
            <person name="Nakano K."/>
            <person name="Ninomiya N."/>
            <person name="Nishio T."/>
            <person name="Okada M."/>
            <person name="Plessy C."/>
            <person name="Shibata K."/>
            <person name="Shiraki T."/>
            <person name="Suzuki S."/>
            <person name="Tagami M."/>
            <person name="Waki K."/>
            <person name="Watahiki A."/>
            <person name="Okamura-Oho Y."/>
            <person name="Suzuki H."/>
            <person name="Kawai J."/>
            <person name="Hayashizaki Y."/>
        </authorList>
    </citation>
    <scope>NUCLEOTIDE SEQUENCE [LARGE SCALE MRNA] (ISOFORMS 1 AND 2)</scope>
    <source>
        <strain>C57BL/6J</strain>
        <strain>NOD</strain>
    </source>
</reference>
<reference key="2">
    <citation type="journal article" date="2004" name="Genome Res.">
        <title>The status, quality, and expansion of the NIH full-length cDNA project: the Mammalian Gene Collection (MGC).</title>
        <authorList>
            <consortium name="The MGC Project Team"/>
        </authorList>
    </citation>
    <scope>NUCLEOTIDE SEQUENCE [LARGE SCALE MRNA] (ISOFORM 1)</scope>
    <source>
        <strain>FVB/N</strain>
        <tissue>Liver</tissue>
        <tissue>Mammary tumor</tissue>
    </source>
</reference>
<reference key="3">
    <citation type="journal article" date="2009" name="Pediatr. Res.">
        <title>The human and mouse SLC25A29 mitochondrial transporters rescue the deficient ornithine metabolism in fibroblasts of patients with the hyperornithinemia-hyperammonemia-homocitrullinuria (HHH) syndrome.</title>
        <authorList>
            <person name="Camacho J.A."/>
            <person name="Rioseco-Camacho N."/>
        </authorList>
    </citation>
    <scope>TISSUE SPECIFICITY</scope>
</reference>
<reference key="4">
    <citation type="journal article" date="2010" name="Cell">
        <title>A tissue-specific atlas of mouse protein phosphorylation and expression.</title>
        <authorList>
            <person name="Huttlin E.L."/>
            <person name="Jedrychowski M.P."/>
            <person name="Elias J.E."/>
            <person name="Goswami T."/>
            <person name="Rad R."/>
            <person name="Beausoleil S.A."/>
            <person name="Villen J."/>
            <person name="Haas W."/>
            <person name="Sowa M.E."/>
            <person name="Gygi S.P."/>
        </authorList>
    </citation>
    <scope>IDENTIFICATION BY MASS SPECTROMETRY [LARGE SCALE ANALYSIS]</scope>
    <source>
        <tissue>Kidney</tissue>
        <tissue>Liver</tissue>
        <tissue>Pancreas</tissue>
        <tissue>Testis</tissue>
    </source>
</reference>
<proteinExistence type="evidence at protein level"/>
<dbReference type="EMBL" id="AK133879">
    <property type="protein sequence ID" value="BAE21908.1"/>
    <property type="molecule type" value="mRNA"/>
</dbReference>
<dbReference type="EMBL" id="AK155754">
    <property type="protein sequence ID" value="BAE33419.1"/>
    <property type="molecule type" value="mRNA"/>
</dbReference>
<dbReference type="EMBL" id="AK169876">
    <property type="protein sequence ID" value="BAE41428.1"/>
    <property type="molecule type" value="mRNA"/>
</dbReference>
<dbReference type="EMBL" id="AK170869">
    <property type="protein sequence ID" value="BAE42082.1"/>
    <property type="status" value="ALT_FRAME"/>
    <property type="molecule type" value="mRNA"/>
</dbReference>
<dbReference type="EMBL" id="BC022156">
    <property type="protein sequence ID" value="AAH22156.1"/>
    <property type="status" value="ALT_INIT"/>
    <property type="molecule type" value="mRNA"/>
</dbReference>
<dbReference type="EMBL" id="BC037680">
    <property type="protein sequence ID" value="AAH37680.1"/>
    <property type="molecule type" value="mRNA"/>
</dbReference>
<dbReference type="CCDS" id="CCDS29482.1">
    <molecule id="Q8CFJ7-1"/>
</dbReference>
<dbReference type="RefSeq" id="NP_001348902.1">
    <molecule id="Q8CFJ7-1"/>
    <property type="nucleotide sequence ID" value="NM_001361973.1"/>
</dbReference>
<dbReference type="RefSeq" id="NP_598915.1">
    <molecule id="Q8CFJ7-1"/>
    <property type="nucleotide sequence ID" value="NM_134154.4"/>
</dbReference>
<dbReference type="RefSeq" id="XP_006531684.1">
    <property type="nucleotide sequence ID" value="XM_006531621.3"/>
</dbReference>
<dbReference type="SMR" id="Q8CFJ7"/>
<dbReference type="BioGRID" id="223254">
    <property type="interactions" value="1"/>
</dbReference>
<dbReference type="FunCoup" id="Q8CFJ7">
    <property type="interactions" value="617"/>
</dbReference>
<dbReference type="STRING" id="10090.ENSMUSP00000025732"/>
<dbReference type="GlyGen" id="Q8CFJ7">
    <property type="glycosylation" value="1 site, 1 O-linked glycan (1 site)"/>
</dbReference>
<dbReference type="SwissPalm" id="Q8CFJ7"/>
<dbReference type="jPOST" id="Q8CFJ7"/>
<dbReference type="PaxDb" id="10090-ENSMUSP00000025732"/>
<dbReference type="PeptideAtlas" id="Q8CFJ7"/>
<dbReference type="ProteomicsDB" id="260766">
    <molecule id="Q8CFJ7-1"/>
</dbReference>
<dbReference type="ProteomicsDB" id="260767">
    <molecule id="Q8CFJ7-2"/>
</dbReference>
<dbReference type="Pumba" id="Q8CFJ7"/>
<dbReference type="Antibodypedia" id="7360">
    <property type="antibodies" value="41 antibodies from 19 providers"/>
</dbReference>
<dbReference type="DNASU" id="107375"/>
<dbReference type="Ensembl" id="ENSMUST00000025732.14">
    <molecule id="Q8CFJ7-1"/>
    <property type="protein sequence ID" value="ENSMUSP00000025732.8"/>
    <property type="gene ID" value="ENSMUSG00000024818.16"/>
</dbReference>
<dbReference type="Ensembl" id="ENSMUST00000125114.8">
    <molecule id="Q8CFJ7-2"/>
    <property type="protein sequence ID" value="ENSMUSP00000122076.2"/>
    <property type="gene ID" value="ENSMUSG00000024818.16"/>
</dbReference>
<dbReference type="Ensembl" id="ENSMUST00000155697.8">
    <molecule id="Q8CFJ7-1"/>
    <property type="protein sequence ID" value="ENSMUSP00000121596.2"/>
    <property type="gene ID" value="ENSMUSG00000024818.16"/>
</dbReference>
<dbReference type="GeneID" id="107375"/>
<dbReference type="KEGG" id="mmu:107375"/>
<dbReference type="UCSC" id="uc008gfq.1">
    <molecule id="Q8CFJ7-1"/>
    <property type="organism name" value="mouse"/>
</dbReference>
<dbReference type="UCSC" id="uc008gfr.1">
    <molecule id="Q8CFJ7-2"/>
    <property type="organism name" value="mouse"/>
</dbReference>
<dbReference type="AGR" id="MGI:2147731"/>
<dbReference type="CTD" id="283130"/>
<dbReference type="MGI" id="MGI:2147731">
    <property type="gene designation" value="Slc25a45"/>
</dbReference>
<dbReference type="VEuPathDB" id="HostDB:ENSMUSG00000024818"/>
<dbReference type="eggNOG" id="KOG0758">
    <property type="taxonomic scope" value="Eukaryota"/>
</dbReference>
<dbReference type="GeneTree" id="ENSGT00940000161002"/>
<dbReference type="HOGENOM" id="CLU_015166_16_1_1"/>
<dbReference type="InParanoid" id="Q8CFJ7"/>
<dbReference type="OMA" id="WVTATPF"/>
<dbReference type="OrthoDB" id="193856at2759"/>
<dbReference type="PhylomeDB" id="Q8CFJ7"/>
<dbReference type="TreeFam" id="TF351739"/>
<dbReference type="BioGRID-ORCS" id="107375">
    <property type="hits" value="2 hits in 76 CRISPR screens"/>
</dbReference>
<dbReference type="PRO" id="PR:Q8CFJ7"/>
<dbReference type="Proteomes" id="UP000000589">
    <property type="component" value="Chromosome 19"/>
</dbReference>
<dbReference type="RNAct" id="Q8CFJ7">
    <property type="molecule type" value="protein"/>
</dbReference>
<dbReference type="Bgee" id="ENSMUSG00000024818">
    <property type="expression patterns" value="Expressed in small intestine Peyer's patch and 146 other cell types or tissues"/>
</dbReference>
<dbReference type="ExpressionAtlas" id="Q8CFJ7">
    <property type="expression patterns" value="baseline and differential"/>
</dbReference>
<dbReference type="GO" id="GO:0005743">
    <property type="term" value="C:mitochondrial inner membrane"/>
    <property type="evidence" value="ECO:0007669"/>
    <property type="project" value="UniProtKB-SubCell"/>
</dbReference>
<dbReference type="GO" id="GO:0005739">
    <property type="term" value="C:mitochondrion"/>
    <property type="evidence" value="ECO:0007005"/>
    <property type="project" value="MGI"/>
</dbReference>
<dbReference type="GO" id="GO:0055085">
    <property type="term" value="P:transmembrane transport"/>
    <property type="evidence" value="ECO:0007669"/>
    <property type="project" value="InterPro"/>
</dbReference>
<dbReference type="FunFam" id="1.50.40.10:FF:000049">
    <property type="entry name" value="Solute carrier family 25 member 45"/>
    <property type="match status" value="1"/>
</dbReference>
<dbReference type="Gene3D" id="1.50.40.10">
    <property type="entry name" value="Mitochondrial carrier domain"/>
    <property type="match status" value="1"/>
</dbReference>
<dbReference type="InterPro" id="IPR002067">
    <property type="entry name" value="Mit_carrier"/>
</dbReference>
<dbReference type="InterPro" id="IPR050567">
    <property type="entry name" value="Mitochondrial_Carrier"/>
</dbReference>
<dbReference type="InterPro" id="IPR018108">
    <property type="entry name" value="Mitochondrial_sb/sol_carrier"/>
</dbReference>
<dbReference type="InterPro" id="IPR023395">
    <property type="entry name" value="Mt_carrier_dom_sf"/>
</dbReference>
<dbReference type="PANTHER" id="PTHR45624">
    <property type="entry name" value="MITOCHONDRIAL BASIC AMINO ACIDS TRANSPORTER-RELATED"/>
    <property type="match status" value="1"/>
</dbReference>
<dbReference type="PANTHER" id="PTHR45624:SF6">
    <property type="entry name" value="SOLUTE CARRIER FAMILY 25 MEMBER 45"/>
    <property type="match status" value="1"/>
</dbReference>
<dbReference type="Pfam" id="PF00153">
    <property type="entry name" value="Mito_carr"/>
    <property type="match status" value="3"/>
</dbReference>
<dbReference type="PRINTS" id="PR00926">
    <property type="entry name" value="MITOCARRIER"/>
</dbReference>
<dbReference type="SUPFAM" id="SSF103506">
    <property type="entry name" value="Mitochondrial carrier"/>
    <property type="match status" value="1"/>
</dbReference>
<dbReference type="PROSITE" id="PS50920">
    <property type="entry name" value="SOLCAR"/>
    <property type="match status" value="3"/>
</dbReference>
<accession>Q8CFJ7</accession>
<accession>Q3TC75</accession>
<accession>Q3UZE9</accession>
<accession>Q8VBZ7</accession>
<evidence type="ECO:0000250" key="1"/>
<evidence type="ECO:0000255" key="2"/>
<evidence type="ECO:0000269" key="3">
    <source>
    </source>
</evidence>
<evidence type="ECO:0000303" key="4">
    <source>
    </source>
</evidence>
<evidence type="ECO:0000305" key="5"/>
<sequence>MPVEEFVAGWISGAVGLVLGHPFDTVKVRLQTQSTYQGIVDCVVKTYRHESVLGFFKGMSFPIASVALVNSVLFGVYSNTLLALTATSHQERRAQPPSYTNIFIAGCTGGLLQAYCLAPFDLIKVRLQNQTEPRMQISSSMPRYRGPVHCAASILREEGPQGLFRGSWALVLRDTPTLGMYFVTYEGLCRQYTPEGQNPSSATVLVAGGFAGIASWITATPFDVIKSRMQMDGLKGRKYGGMLDCMASSFRQEGIGVFFKGMTLNSARAFPVNAATFLSYEYLLRLWR</sequence>
<name>S2545_MOUSE</name>
<feature type="chain" id="PRO_0000291827" description="Solute carrier family 25 member 45">
    <location>
        <begin position="1"/>
        <end position="288"/>
    </location>
</feature>
<feature type="transmembrane region" description="Helical; Name=1" evidence="2">
    <location>
        <begin position="6"/>
        <end position="26"/>
    </location>
</feature>
<feature type="transmembrane region" description="Helical; Name=2" evidence="2">
    <location>
        <begin position="58"/>
        <end position="78"/>
    </location>
</feature>
<feature type="transmembrane region" description="Helical; Name=3" evidence="2">
    <location>
        <begin position="102"/>
        <end position="122"/>
    </location>
</feature>
<feature type="transmembrane region" description="Helical; Name=4" evidence="2">
    <location>
        <begin position="166"/>
        <end position="186"/>
    </location>
</feature>
<feature type="transmembrane region" description="Helical; Name=5" evidence="2">
    <location>
        <begin position="202"/>
        <end position="222"/>
    </location>
</feature>
<feature type="transmembrane region" description="Helical; Name=6" evidence="2">
    <location>
        <begin position="266"/>
        <end position="286"/>
    </location>
</feature>
<feature type="repeat" description="Solcar 1">
    <location>
        <begin position="1"/>
        <end position="83"/>
    </location>
</feature>
<feature type="repeat" description="Solcar 2">
    <location>
        <begin position="97"/>
        <end position="191"/>
    </location>
</feature>
<feature type="repeat" description="Solcar 3">
    <location>
        <begin position="199"/>
        <end position="286"/>
    </location>
</feature>
<feature type="splice variant" id="VSP_026250" description="In isoform 2." evidence="4">
    <original>SATVLVAGGFAG</original>
    <variation>KWGEVGWGGGTA</variation>
    <location>
        <begin position="201"/>
        <end position="212"/>
    </location>
</feature>
<feature type="splice variant" id="VSP_026251" description="In isoform 2." evidence="4">
    <location>
        <begin position="213"/>
        <end position="288"/>
    </location>
</feature>
<comment type="subcellular location">
    <subcellularLocation>
        <location evidence="1">Mitochondrion inner membrane</location>
        <topology evidence="1">Multi-pass membrane protein</topology>
    </subcellularLocation>
</comment>
<comment type="alternative products">
    <event type="alternative splicing"/>
    <isoform>
        <id>Q8CFJ7-1</id>
        <name>1</name>
        <sequence type="displayed"/>
    </isoform>
    <isoform>
        <id>Q8CFJ7-2</id>
        <name>2</name>
        <sequence type="described" ref="VSP_026250 VSP_026251"/>
    </isoform>
</comment>
<comment type="tissue specificity">
    <text evidence="3">Widely expressed, with highest levels in testis, liver and kidney and low levels in brain, including cortex, cerebellum, hippocampus and hypothalamus, and heart.</text>
</comment>
<comment type="similarity">
    <text evidence="5">Belongs to the mitochondrial carrier (TC 2.A.29) family.</text>
</comment>
<comment type="sequence caution" evidence="5">
    <conflict type="erroneous initiation">
        <sequence resource="EMBL-CDS" id="AAH22156"/>
    </conflict>
</comment>
<comment type="sequence caution" evidence="5">
    <conflict type="frameshift">
        <sequence resource="EMBL-CDS" id="BAE42082"/>
    </conflict>
</comment>
<gene>
    <name type="primary">Slc25a45</name>
</gene>
<organism>
    <name type="scientific">Mus musculus</name>
    <name type="common">Mouse</name>
    <dbReference type="NCBI Taxonomy" id="10090"/>
    <lineage>
        <taxon>Eukaryota</taxon>
        <taxon>Metazoa</taxon>
        <taxon>Chordata</taxon>
        <taxon>Craniata</taxon>
        <taxon>Vertebrata</taxon>
        <taxon>Euteleostomi</taxon>
        <taxon>Mammalia</taxon>
        <taxon>Eutheria</taxon>
        <taxon>Euarchontoglires</taxon>
        <taxon>Glires</taxon>
        <taxon>Rodentia</taxon>
        <taxon>Myomorpha</taxon>
        <taxon>Muroidea</taxon>
        <taxon>Muridae</taxon>
        <taxon>Murinae</taxon>
        <taxon>Mus</taxon>
        <taxon>Mus</taxon>
    </lineage>
</organism>
<protein>
    <recommendedName>
        <fullName>Solute carrier family 25 member 45</fullName>
    </recommendedName>
</protein>
<keyword id="KW-0025">Alternative splicing</keyword>
<keyword id="KW-0472">Membrane</keyword>
<keyword id="KW-0496">Mitochondrion</keyword>
<keyword id="KW-0999">Mitochondrion inner membrane</keyword>
<keyword id="KW-1185">Reference proteome</keyword>
<keyword id="KW-0677">Repeat</keyword>
<keyword id="KW-0812">Transmembrane</keyword>
<keyword id="KW-1133">Transmembrane helix</keyword>
<keyword id="KW-0813">Transport</keyword>